<keyword id="KW-0687">Ribonucleoprotein</keyword>
<keyword id="KW-0689">Ribosomal protein</keyword>
<feature type="chain" id="PRO_1000193899" description="Large ribosomal subunit protein bL19">
    <location>
        <begin position="1"/>
        <end position="115"/>
    </location>
</feature>
<proteinExistence type="inferred from homology"/>
<evidence type="ECO:0000255" key="1">
    <source>
        <dbReference type="HAMAP-Rule" id="MF_00402"/>
    </source>
</evidence>
<evidence type="ECO:0000305" key="2"/>
<reference key="1">
    <citation type="journal article" date="2010" name="Genome Biol.">
        <title>Structure and dynamics of the pan-genome of Streptococcus pneumoniae and closely related species.</title>
        <authorList>
            <person name="Donati C."/>
            <person name="Hiller N.L."/>
            <person name="Tettelin H."/>
            <person name="Muzzi A."/>
            <person name="Croucher N.J."/>
            <person name="Angiuoli S.V."/>
            <person name="Oggioni M."/>
            <person name="Dunning Hotopp J.C."/>
            <person name="Hu F.Z."/>
            <person name="Riley D.R."/>
            <person name="Covacci A."/>
            <person name="Mitchell T.J."/>
            <person name="Bentley S.D."/>
            <person name="Kilian M."/>
            <person name="Ehrlich G.D."/>
            <person name="Rappuoli R."/>
            <person name="Moxon E.R."/>
            <person name="Masignani V."/>
        </authorList>
    </citation>
    <scope>NUCLEOTIDE SEQUENCE [LARGE SCALE GENOMIC DNA]</scope>
    <source>
        <strain>Taiwan19F-14</strain>
    </source>
</reference>
<accession>C1CR13</accession>
<name>RL19_STRZT</name>
<dbReference type="EMBL" id="CP000921">
    <property type="protein sequence ID" value="ACO22825.1"/>
    <property type="molecule type" value="Genomic_DNA"/>
</dbReference>
<dbReference type="RefSeq" id="WP_001068669.1">
    <property type="nucleotide sequence ID" value="NC_012469.1"/>
</dbReference>
<dbReference type="SMR" id="C1CR13"/>
<dbReference type="GeneID" id="93739485"/>
<dbReference type="KEGG" id="snt:SPT_0933"/>
<dbReference type="HOGENOM" id="CLU_103507_2_1_9"/>
<dbReference type="GO" id="GO:0022625">
    <property type="term" value="C:cytosolic large ribosomal subunit"/>
    <property type="evidence" value="ECO:0007669"/>
    <property type="project" value="TreeGrafter"/>
</dbReference>
<dbReference type="GO" id="GO:0003735">
    <property type="term" value="F:structural constituent of ribosome"/>
    <property type="evidence" value="ECO:0007669"/>
    <property type="project" value="InterPro"/>
</dbReference>
<dbReference type="GO" id="GO:0006412">
    <property type="term" value="P:translation"/>
    <property type="evidence" value="ECO:0007669"/>
    <property type="project" value="UniProtKB-UniRule"/>
</dbReference>
<dbReference type="FunFam" id="2.30.30.790:FF:000001">
    <property type="entry name" value="50S ribosomal protein L19"/>
    <property type="match status" value="1"/>
</dbReference>
<dbReference type="Gene3D" id="2.30.30.790">
    <property type="match status" value="1"/>
</dbReference>
<dbReference type="HAMAP" id="MF_00402">
    <property type="entry name" value="Ribosomal_bL19"/>
    <property type="match status" value="1"/>
</dbReference>
<dbReference type="InterPro" id="IPR001857">
    <property type="entry name" value="Ribosomal_bL19"/>
</dbReference>
<dbReference type="InterPro" id="IPR018257">
    <property type="entry name" value="Ribosomal_bL19_CS"/>
</dbReference>
<dbReference type="InterPro" id="IPR038657">
    <property type="entry name" value="Ribosomal_bL19_sf"/>
</dbReference>
<dbReference type="InterPro" id="IPR008991">
    <property type="entry name" value="Translation_prot_SH3-like_sf"/>
</dbReference>
<dbReference type="NCBIfam" id="TIGR01024">
    <property type="entry name" value="rplS_bact"/>
    <property type="match status" value="1"/>
</dbReference>
<dbReference type="PANTHER" id="PTHR15680:SF9">
    <property type="entry name" value="LARGE RIBOSOMAL SUBUNIT PROTEIN BL19M"/>
    <property type="match status" value="1"/>
</dbReference>
<dbReference type="PANTHER" id="PTHR15680">
    <property type="entry name" value="RIBOSOMAL PROTEIN L19"/>
    <property type="match status" value="1"/>
</dbReference>
<dbReference type="Pfam" id="PF01245">
    <property type="entry name" value="Ribosomal_L19"/>
    <property type="match status" value="1"/>
</dbReference>
<dbReference type="PIRSF" id="PIRSF002191">
    <property type="entry name" value="Ribosomal_L19"/>
    <property type="match status" value="1"/>
</dbReference>
<dbReference type="PRINTS" id="PR00061">
    <property type="entry name" value="RIBOSOMALL19"/>
</dbReference>
<dbReference type="SUPFAM" id="SSF50104">
    <property type="entry name" value="Translation proteins SH3-like domain"/>
    <property type="match status" value="1"/>
</dbReference>
<dbReference type="PROSITE" id="PS01015">
    <property type="entry name" value="RIBOSOMAL_L19"/>
    <property type="match status" value="1"/>
</dbReference>
<gene>
    <name evidence="1" type="primary">rplS</name>
    <name type="ordered locus">SPT_0933</name>
</gene>
<protein>
    <recommendedName>
        <fullName evidence="1">Large ribosomal subunit protein bL19</fullName>
    </recommendedName>
    <alternativeName>
        <fullName evidence="2">50S ribosomal protein L19</fullName>
    </alternativeName>
</protein>
<organism>
    <name type="scientific">Streptococcus pneumoniae (strain Taiwan19F-14)</name>
    <dbReference type="NCBI Taxonomy" id="487213"/>
    <lineage>
        <taxon>Bacteria</taxon>
        <taxon>Bacillati</taxon>
        <taxon>Bacillota</taxon>
        <taxon>Bacilli</taxon>
        <taxon>Lactobacillales</taxon>
        <taxon>Streptococcaceae</taxon>
        <taxon>Streptococcus</taxon>
    </lineage>
</organism>
<comment type="function">
    <text evidence="1">This protein is located at the 30S-50S ribosomal subunit interface and may play a role in the structure and function of the aminoacyl-tRNA binding site.</text>
</comment>
<comment type="similarity">
    <text evidence="1">Belongs to the bacterial ribosomal protein bL19 family.</text>
</comment>
<sequence length="115" mass="13136">MNPLIQSLTEGQLRTDIPSFRPGDTVRVHAKVVEGNRERIQIFEGVVIARKGAGISENYTVRKISNGVGVERIFPIHTPRVEKIEVVRYGKVRRAKLYYLRALQGKAARIKEIRR</sequence>